<reference key="1">
    <citation type="journal article" date="2008" name="PLoS ONE">
        <title>A recalibrated molecular clock and independent origins for the cholera pandemic clones.</title>
        <authorList>
            <person name="Feng L."/>
            <person name="Reeves P.R."/>
            <person name="Lan R."/>
            <person name="Ren Y."/>
            <person name="Gao C."/>
            <person name="Zhou Z."/>
            <person name="Ren Y."/>
            <person name="Cheng J."/>
            <person name="Wang W."/>
            <person name="Wang J."/>
            <person name="Qian W."/>
            <person name="Li D."/>
            <person name="Wang L."/>
        </authorList>
    </citation>
    <scope>NUCLEOTIDE SEQUENCE [LARGE SCALE GENOMIC DNA]</scope>
    <source>
        <strain>M66-2</strain>
    </source>
</reference>
<evidence type="ECO:0000255" key="1">
    <source>
        <dbReference type="HAMAP-Rule" id="MF_00790"/>
    </source>
</evidence>
<sequence length="284" mass="32561">MKKIAWSLGILVTIGALCAIVWPSWYPSRPLVTTPSQADIQADQSSPRDLLEYFLSGLGETSLPVIQQQVQRYEQENQGLLIDSSLFAQYVQYKAALSELTLPQASGGLSTQEWWQLHQSLLDLQARYFSAEQQALFAEENRLRELAIEKRRIYEQYGQSEEAQRAWQALLLDQPDFIQRSEATAQLLPQLTQAGQGDTQQRYLARVALVGEQGAQRLAELDDSRATFEQQFQDYYQARAAILVRNELSASEQQTQIQQLREQHFAPEQWRRIDALERLKDNGE</sequence>
<keyword id="KW-0997">Cell inner membrane</keyword>
<keyword id="KW-1003">Cell membrane</keyword>
<keyword id="KW-0143">Chaperone</keyword>
<keyword id="KW-0442">Lipid degradation</keyword>
<keyword id="KW-0443">Lipid metabolism</keyword>
<keyword id="KW-0472">Membrane</keyword>
<keyword id="KW-0812">Transmembrane</keyword>
<keyword id="KW-1133">Transmembrane helix</keyword>
<gene>
    <name evidence="1" type="primary">lifO</name>
    <name type="ordered locus">VCM66_A0218</name>
</gene>
<dbReference type="EMBL" id="CP001234">
    <property type="protein sequence ID" value="ACP07197.1"/>
    <property type="molecule type" value="Genomic_DNA"/>
</dbReference>
<dbReference type="RefSeq" id="WP_000717572.1">
    <property type="nucleotide sequence ID" value="NC_012580.1"/>
</dbReference>
<dbReference type="SMR" id="C3LUP2"/>
<dbReference type="KEGG" id="vcm:VCM66_A0218"/>
<dbReference type="HOGENOM" id="CLU_085683_0_0_6"/>
<dbReference type="Proteomes" id="UP000001217">
    <property type="component" value="Chromosome II"/>
</dbReference>
<dbReference type="GO" id="GO:0005886">
    <property type="term" value="C:plasma membrane"/>
    <property type="evidence" value="ECO:0007669"/>
    <property type="project" value="UniProtKB-SubCell"/>
</dbReference>
<dbReference type="GO" id="GO:0051082">
    <property type="term" value="F:unfolded protein binding"/>
    <property type="evidence" value="ECO:0007669"/>
    <property type="project" value="UniProtKB-UniRule"/>
</dbReference>
<dbReference type="GO" id="GO:0016042">
    <property type="term" value="P:lipid catabolic process"/>
    <property type="evidence" value="ECO:0007669"/>
    <property type="project" value="UniProtKB-UniRule"/>
</dbReference>
<dbReference type="GO" id="GO:0006457">
    <property type="term" value="P:protein folding"/>
    <property type="evidence" value="ECO:0007669"/>
    <property type="project" value="UniProtKB-UniRule"/>
</dbReference>
<dbReference type="HAMAP" id="MF_00790">
    <property type="entry name" value="Lipase_chap"/>
    <property type="match status" value="1"/>
</dbReference>
<dbReference type="InterPro" id="IPR004961">
    <property type="entry name" value="Lipase_chaperone"/>
</dbReference>
<dbReference type="NCBIfam" id="NF002337">
    <property type="entry name" value="PRK01294.1-5"/>
    <property type="match status" value="1"/>
</dbReference>
<dbReference type="Pfam" id="PF03280">
    <property type="entry name" value="Lipase_chap"/>
    <property type="match status" value="1"/>
</dbReference>
<dbReference type="SUPFAM" id="SSF158855">
    <property type="entry name" value="Lipase chaperone-like"/>
    <property type="match status" value="1"/>
</dbReference>
<accession>C3LUP2</accession>
<proteinExistence type="inferred from homology"/>
<name>LIFO_VIBCM</name>
<organism>
    <name type="scientific">Vibrio cholerae serotype O1 (strain M66-2)</name>
    <dbReference type="NCBI Taxonomy" id="579112"/>
    <lineage>
        <taxon>Bacteria</taxon>
        <taxon>Pseudomonadati</taxon>
        <taxon>Pseudomonadota</taxon>
        <taxon>Gammaproteobacteria</taxon>
        <taxon>Vibrionales</taxon>
        <taxon>Vibrionaceae</taxon>
        <taxon>Vibrio</taxon>
    </lineage>
</organism>
<comment type="function">
    <text evidence="1">May be involved in the folding of the extracellular lipase during its passage through the periplasm.</text>
</comment>
<comment type="subcellular location">
    <subcellularLocation>
        <location evidence="1">Cell inner membrane</location>
        <topology evidence="1">Single-pass membrane protein</topology>
    </subcellularLocation>
</comment>
<comment type="similarity">
    <text evidence="1">Belongs to the lipase chaperone family.</text>
</comment>
<feature type="chain" id="PRO_1000148492" description="Lipase chaperone">
    <location>
        <begin position="1"/>
        <end position="284"/>
    </location>
</feature>
<feature type="transmembrane region" description="Helical" evidence="1">
    <location>
        <begin position="4"/>
        <end position="24"/>
    </location>
</feature>
<protein>
    <recommendedName>
        <fullName evidence="1">Lipase chaperone</fullName>
    </recommendedName>
    <alternativeName>
        <fullName evidence="1">Lipase activator protein</fullName>
    </alternativeName>
    <alternativeName>
        <fullName evidence="1">Lipase foldase</fullName>
    </alternativeName>
    <alternativeName>
        <fullName evidence="1">Lipase helper protein</fullName>
    </alternativeName>
    <alternativeName>
        <fullName evidence="1">Lipase modulator</fullName>
    </alternativeName>
</protein>